<sequence>MDEALTNASAIGDQRQKIEQYKLILSSVLSSNDLLQAQRFIDHILSDDVPLVVSRQLLQSFAQELGRLEPETQKEIAQFTLTQIQPRVVSFEEQALVIREKLAGLYESEQEWSKAAQMLSGIDLDSGMRAVDDNFKLSKCIQIARLYLEDDDAVNAEAFINKASFLVSNSQNEVLNLQYKVCYARILDMKRKFLEAALRYYGISQIEQRQIGDEEIDENALEQALSAAVTCTILAGAGPQRSRVLATLYKDERCSKLKIYPILQKVYLERILRRPEIDAFSEELRPHQKASLPDKSTVLDRAMIEHNLLSASKLYTNIRFDELGTLLAIDPRKAEKIAANMIGQDRMRGSIDQEEAVIHFEDDVEELQQWDQQISGLCQALNDILDGMAKKGMSVPV</sequence>
<reference key="1">
    <citation type="journal article" date="1999" name="Plant Cell">
        <title>Arabidopsis cop8 and fus4 mutations define the same gene that encodes subunit 4 of the COP9 signalosome.</title>
        <authorList>
            <person name="Serino G."/>
            <person name="Tsuge T."/>
            <person name="Kwok S."/>
            <person name="Matsui M."/>
            <person name="Wei N."/>
            <person name="Deng X.-W."/>
        </authorList>
    </citation>
    <scope>NUCLEOTIDE SEQUENCE</scope>
    <scope>FUNCTION</scope>
    <scope>INTERACTION WITH CSN1; CSN5B; CSN7 AND CSN8</scope>
    <scope>MUTANT FUS4-414</scope>
    <source>
        <strain>cv. Columbia</strain>
    </source>
</reference>
<reference key="2">
    <citation type="journal article" date="2001" name="EMBO J.">
        <title>Subunit interaction maps for the regulatory particle of the 26S proteasome and the COP9 signalosome.</title>
        <authorList>
            <person name="Fu H."/>
            <person name="Reis N."/>
            <person name="Lee Y."/>
            <person name="Glickman M.H."/>
            <person name="Vierstra R."/>
        </authorList>
    </citation>
    <scope>NUCLEOTIDE SEQUENCE</scope>
    <scope>INTERACTION WITH CSN3; CSN5B AND CSN7</scope>
    <source>
        <strain>cv. Columbia</strain>
    </source>
</reference>
<reference key="3">
    <citation type="journal article" date="1997" name="DNA Res.">
        <title>Structural analysis of Arabidopsis thaliana chromosome 5. III. Sequence features of the regions of 1,191,918 bp covered by seventeen physically assigned P1 clones.</title>
        <authorList>
            <person name="Nakamura Y."/>
            <person name="Sato S."/>
            <person name="Kaneko T."/>
            <person name="Kotani H."/>
            <person name="Asamizu E."/>
            <person name="Miyajima N."/>
            <person name="Tabata S."/>
        </authorList>
    </citation>
    <scope>NUCLEOTIDE SEQUENCE [LARGE SCALE GENOMIC DNA]</scope>
    <source>
        <strain>cv. Columbia</strain>
    </source>
</reference>
<reference key="4">
    <citation type="journal article" date="2017" name="Plant J.">
        <title>Araport11: a complete reannotation of the Arabidopsis thaliana reference genome.</title>
        <authorList>
            <person name="Cheng C.Y."/>
            <person name="Krishnakumar V."/>
            <person name="Chan A.P."/>
            <person name="Thibaud-Nissen F."/>
            <person name="Schobel S."/>
            <person name="Town C.D."/>
        </authorList>
    </citation>
    <scope>GENOME REANNOTATION</scope>
    <source>
        <strain>cv. Columbia</strain>
    </source>
</reference>
<reference key="5">
    <citation type="submission" date="2002-03" db="EMBL/GenBank/DDBJ databases">
        <title>Full-length cDNA from Arabidopsis thaliana.</title>
        <authorList>
            <person name="Brover V.V."/>
            <person name="Troukhan M.E."/>
            <person name="Alexandrov N.A."/>
            <person name="Lu Y.-P."/>
            <person name="Flavell R.B."/>
            <person name="Feldmann K.A."/>
        </authorList>
    </citation>
    <scope>NUCLEOTIDE SEQUENCE [LARGE SCALE MRNA]</scope>
</reference>
<reference key="6">
    <citation type="submission" date="2004-09" db="EMBL/GenBank/DDBJ databases">
        <title>Large-scale analysis of RIKEN Arabidopsis full-length (RAFL) cDNAs.</title>
        <authorList>
            <person name="Totoki Y."/>
            <person name="Seki M."/>
            <person name="Ishida J."/>
            <person name="Nakajima M."/>
            <person name="Enju A."/>
            <person name="Kamiya A."/>
            <person name="Narusaka M."/>
            <person name="Shin-i T."/>
            <person name="Nakagawa M."/>
            <person name="Sakamoto N."/>
            <person name="Oishi K."/>
            <person name="Kohara Y."/>
            <person name="Kobayashi M."/>
            <person name="Toyoda A."/>
            <person name="Sakaki Y."/>
            <person name="Sakurai T."/>
            <person name="Iida K."/>
            <person name="Akiyama K."/>
            <person name="Satou M."/>
            <person name="Toyoda T."/>
            <person name="Konagaya A."/>
            <person name="Carninci P."/>
            <person name="Kawai J."/>
            <person name="Hayashizaki Y."/>
            <person name="Shinozaki K."/>
        </authorList>
    </citation>
    <scope>NUCLEOTIDE SEQUENCE [LARGE SCALE MRNA]</scope>
    <source>
        <strain>cv. Columbia</strain>
    </source>
</reference>
<reference key="7">
    <citation type="journal article" date="2001" name="Science">
        <title>Interactions of the COP9 signalosome with the E3 ubiquitin ligase SCF(TIR1) in mediating auxin response.</title>
        <authorList>
            <person name="Schwechheimer C."/>
            <person name="Serino G."/>
            <person name="Callis J."/>
            <person name="Crosby W.L."/>
            <person name="Lyapina S."/>
            <person name="Deshaies R.J."/>
            <person name="Gray W.M."/>
            <person name="Estelle M."/>
            <person name="Deng X.-W."/>
        </authorList>
    </citation>
    <scope>FUNCTION</scope>
</reference>
<reference key="8">
    <citation type="journal article" date="2002" name="Genes Dev.">
        <title>Arabidopsis COP10 is a ubiquitin-conjugating enzyme variant that acts together with COP1 and the COP9 signalosome in repressing photomorphogenesis.</title>
        <authorList>
            <person name="Suzuki G."/>
            <person name="Yanagawa Y."/>
            <person name="Kwok S.F."/>
            <person name="Matsui M."/>
            <person name="Deng X.-W."/>
        </authorList>
    </citation>
    <scope>INTERACTION WITH COP10</scope>
</reference>
<reference key="9">
    <citation type="journal article" date="2003" name="Plant Cell">
        <title>Characterization of the last subunit of the Arabidopsis COP9 signalosome: implications for the overall structure and origin of the complex.</title>
        <authorList>
            <person name="Serino G."/>
            <person name="Su H."/>
            <person name="Peng Z."/>
            <person name="Tsuge T."/>
            <person name="Wei N."/>
            <person name="Gu H."/>
            <person name="Deng X.-W."/>
        </authorList>
    </citation>
    <scope>INTERACTION WITH CSN1; CSN2; CSN3; CSN4; CSN5; CSN6; CSN7 AND CSN8</scope>
</reference>
<reference key="10">
    <citation type="journal article" date="2008" name="Plant Signal. Behav.">
        <title>Arabidopsis eIF3e interacts with subunits of the ribosome, Cop9 signalosome and proteasome.</title>
        <authorList>
            <person name="Paz-Aviram T."/>
            <person name="Yahalom A."/>
            <person name="Chamovitz D.A."/>
        </authorList>
    </citation>
    <scope>INTERACTION WITH TIF3E1</scope>
</reference>
<reference key="11">
    <citation type="journal article" date="2012" name="Mol. Cell. Proteomics">
        <title>Comparative large-scale characterisation of plant vs. mammal proteins reveals similar and idiosyncratic N-alpha acetylation features.</title>
        <authorList>
            <person name="Bienvenut W.V."/>
            <person name="Sumpton D."/>
            <person name="Martinez A."/>
            <person name="Lilla S."/>
            <person name="Espagne C."/>
            <person name="Meinnel T."/>
            <person name="Giglione C."/>
        </authorList>
    </citation>
    <scope>ACETYLATION [LARGE SCALE ANALYSIS] AT MET-1</scope>
    <scope>IDENTIFICATION BY MASS SPECTROMETRY [LARGE SCALE ANALYSIS]</scope>
</reference>
<dbReference type="EMBL" id="AF176089">
    <property type="protein sequence ID" value="AAD51742.1"/>
    <property type="molecule type" value="mRNA"/>
</dbReference>
<dbReference type="EMBL" id="AF395060">
    <property type="protein sequence ID" value="AAL58103.1"/>
    <property type="molecule type" value="mRNA"/>
</dbReference>
<dbReference type="EMBL" id="AB008264">
    <property type="protein sequence ID" value="BAB09199.1"/>
    <property type="molecule type" value="Genomic_DNA"/>
</dbReference>
<dbReference type="EMBL" id="CP002688">
    <property type="protein sequence ID" value="AED94896.1"/>
    <property type="molecule type" value="Genomic_DNA"/>
</dbReference>
<dbReference type="EMBL" id="AY087068">
    <property type="protein sequence ID" value="AAM64629.1"/>
    <property type="molecule type" value="mRNA"/>
</dbReference>
<dbReference type="EMBL" id="AK176360">
    <property type="protein sequence ID" value="BAD44123.1"/>
    <property type="molecule type" value="mRNA"/>
</dbReference>
<dbReference type="PIR" id="T52302">
    <property type="entry name" value="T52302"/>
</dbReference>
<dbReference type="RefSeq" id="NP_199111.1">
    <property type="nucleotide sequence ID" value="NM_123663.3"/>
</dbReference>
<dbReference type="SMR" id="Q8L5U0"/>
<dbReference type="BioGRID" id="19562">
    <property type="interactions" value="25"/>
</dbReference>
<dbReference type="FunCoup" id="Q8L5U0">
    <property type="interactions" value="5065"/>
</dbReference>
<dbReference type="IntAct" id="Q8L5U0">
    <property type="interactions" value="13"/>
</dbReference>
<dbReference type="STRING" id="3702.Q8L5U0"/>
<dbReference type="iPTMnet" id="Q8L5U0"/>
<dbReference type="PaxDb" id="3702-AT5G42970.1"/>
<dbReference type="ProteomicsDB" id="222621"/>
<dbReference type="EnsemblPlants" id="AT5G42970.1">
    <property type="protein sequence ID" value="AT5G42970.1"/>
    <property type="gene ID" value="AT5G42970"/>
</dbReference>
<dbReference type="GeneID" id="834312"/>
<dbReference type="Gramene" id="AT5G42970.1">
    <property type="protein sequence ID" value="AT5G42970.1"/>
    <property type="gene ID" value="AT5G42970"/>
</dbReference>
<dbReference type="KEGG" id="ath:AT5G42970"/>
<dbReference type="Araport" id="AT5G42970"/>
<dbReference type="TAIR" id="AT5G42970">
    <property type="gene designation" value="COP8"/>
</dbReference>
<dbReference type="eggNOG" id="KOG1497">
    <property type="taxonomic scope" value="Eukaryota"/>
</dbReference>
<dbReference type="HOGENOM" id="CLU_028132_1_0_1"/>
<dbReference type="InParanoid" id="Q8L5U0"/>
<dbReference type="OMA" id="KNIMHTV"/>
<dbReference type="OrthoDB" id="295656at2759"/>
<dbReference type="PhylomeDB" id="Q8L5U0"/>
<dbReference type="PRO" id="PR:Q8L5U0"/>
<dbReference type="Proteomes" id="UP000006548">
    <property type="component" value="Chromosome 5"/>
</dbReference>
<dbReference type="ExpressionAtlas" id="Q8L5U0">
    <property type="expression patterns" value="baseline and differential"/>
</dbReference>
<dbReference type="GO" id="GO:0008180">
    <property type="term" value="C:COP9 signalosome"/>
    <property type="evidence" value="ECO:0000314"/>
    <property type="project" value="TAIR"/>
</dbReference>
<dbReference type="GO" id="GO:0005737">
    <property type="term" value="C:cytoplasm"/>
    <property type="evidence" value="ECO:0007669"/>
    <property type="project" value="UniProtKB-SubCell"/>
</dbReference>
<dbReference type="GO" id="GO:0032991">
    <property type="term" value="C:protein-containing complex"/>
    <property type="evidence" value="ECO:0000314"/>
    <property type="project" value="TAIR"/>
</dbReference>
<dbReference type="GO" id="GO:0010100">
    <property type="term" value="P:negative regulation of photomorphogenesis"/>
    <property type="evidence" value="ECO:0000315"/>
    <property type="project" value="TAIR"/>
</dbReference>
<dbReference type="GO" id="GO:0010971">
    <property type="term" value="P:positive regulation of G2/M transition of mitotic cell cycle"/>
    <property type="evidence" value="ECO:0000315"/>
    <property type="project" value="TAIR"/>
</dbReference>
<dbReference type="GO" id="GO:0000338">
    <property type="term" value="P:protein deneddylation"/>
    <property type="evidence" value="ECO:0000315"/>
    <property type="project" value="TAIR"/>
</dbReference>
<dbReference type="GO" id="GO:0009585">
    <property type="term" value="P:red, far-red light phototransduction"/>
    <property type="evidence" value="ECO:0007669"/>
    <property type="project" value="UniProtKB-KW"/>
</dbReference>
<dbReference type="FunFam" id="1.10.10.10:FF:000190">
    <property type="entry name" value="COP9 signalosome complex subunit 4"/>
    <property type="match status" value="1"/>
</dbReference>
<dbReference type="Gene3D" id="1.10.10.10">
    <property type="entry name" value="Winged helix-like DNA-binding domain superfamily/Winged helix DNA-binding domain"/>
    <property type="match status" value="1"/>
</dbReference>
<dbReference type="InterPro" id="IPR000717">
    <property type="entry name" value="PCI_dom"/>
</dbReference>
<dbReference type="InterPro" id="IPR054559">
    <property type="entry name" value="PSMD12-CSN4-like_N"/>
</dbReference>
<dbReference type="InterPro" id="IPR040134">
    <property type="entry name" value="PSMD12/CSN4"/>
</dbReference>
<dbReference type="InterPro" id="IPR036388">
    <property type="entry name" value="WH-like_DNA-bd_sf"/>
</dbReference>
<dbReference type="InterPro" id="IPR036390">
    <property type="entry name" value="WH_DNA-bd_sf"/>
</dbReference>
<dbReference type="PANTHER" id="PTHR10855">
    <property type="entry name" value="26S PROTEASOME NON-ATPASE REGULATORY SUBUNIT 12/COP9 SIGNALOSOME COMPLEX SUBUNIT 4"/>
    <property type="match status" value="1"/>
</dbReference>
<dbReference type="PANTHER" id="PTHR10855:SF2">
    <property type="entry name" value="COP9 SIGNALOSOME COMPLEX SUBUNIT 4"/>
    <property type="match status" value="1"/>
</dbReference>
<dbReference type="Pfam" id="PF01399">
    <property type="entry name" value="PCI"/>
    <property type="match status" value="1"/>
</dbReference>
<dbReference type="Pfam" id="PF22241">
    <property type="entry name" value="PSMD12-CSN4_N"/>
    <property type="match status" value="1"/>
</dbReference>
<dbReference type="SMART" id="SM00088">
    <property type="entry name" value="PINT"/>
    <property type="match status" value="1"/>
</dbReference>
<dbReference type="SUPFAM" id="SSF46785">
    <property type="entry name" value="Winged helix' DNA-binding domain"/>
    <property type="match status" value="1"/>
</dbReference>
<dbReference type="PROSITE" id="PS50250">
    <property type="entry name" value="PCI"/>
    <property type="match status" value="1"/>
</dbReference>
<protein>
    <recommendedName>
        <fullName>COP9 signalosome complex subunit 4</fullName>
        <shortName>AtS4</shortName>
        <shortName>Signalosome subunit 4</shortName>
    </recommendedName>
    <alternativeName>
        <fullName>Constitutive photomorphogenesis protein 8</fullName>
    </alternativeName>
    <alternativeName>
        <fullName>Protein FUSCA 4</fullName>
    </alternativeName>
</protein>
<accession>Q8L5U0</accession>
<accession>Q9FMM1</accession>
<accession>Q9SW74</accession>
<name>CSN4_ARATH</name>
<evidence type="ECO:0000255" key="1">
    <source>
        <dbReference type="PROSITE-ProRule" id="PRU01185"/>
    </source>
</evidence>
<evidence type="ECO:0000269" key="2">
    <source>
    </source>
</evidence>
<evidence type="ECO:0000269" key="3">
    <source>
    </source>
</evidence>
<evidence type="ECO:0000269" key="4">
    <source>
    </source>
</evidence>
<evidence type="ECO:0000269" key="5">
    <source>
    </source>
</evidence>
<evidence type="ECO:0000269" key="6">
    <source>
    </source>
</evidence>
<evidence type="ECO:0000269" key="7">
    <source>
    </source>
</evidence>
<evidence type="ECO:0000305" key="8"/>
<evidence type="ECO:0007744" key="9">
    <source>
    </source>
</evidence>
<feature type="chain" id="PRO_0000120993" description="COP9 signalosome complex subunit 4">
    <location>
        <begin position="1"/>
        <end position="397"/>
    </location>
</feature>
<feature type="domain" description="PCI" evidence="1">
    <location>
        <begin position="197"/>
        <end position="365"/>
    </location>
</feature>
<feature type="modified residue" description="N-acetylmethionine" evidence="9">
    <location>
        <position position="1"/>
    </location>
</feature>
<feature type="mutagenesis site" description="In fu4-414; induces seedlings defects and lethality after the seedling stage.">
    <location>
        <begin position="251"/>
        <end position="265"/>
    </location>
</feature>
<feature type="sequence conflict" description="In Ref. 5; AAM64629." evidence="8" ref="5">
    <original>V</original>
    <variation>F</variation>
    <location>
        <position position="244"/>
    </location>
</feature>
<feature type="sequence conflict" description="In Ref. 1; AAD51742." evidence="8" ref="1">
    <original>M</original>
    <variation>V</variation>
    <location>
        <position position="303"/>
    </location>
</feature>
<keyword id="KW-0007">Acetylation</keyword>
<keyword id="KW-0963">Cytoplasm</keyword>
<keyword id="KW-0217">Developmental protein</keyword>
<keyword id="KW-0539">Nucleus</keyword>
<keyword id="KW-0607">Phytochrome signaling pathway</keyword>
<keyword id="KW-1185">Reference proteome</keyword>
<keyword id="KW-0736">Signalosome</keyword>
<organism>
    <name type="scientific">Arabidopsis thaliana</name>
    <name type="common">Mouse-ear cress</name>
    <dbReference type="NCBI Taxonomy" id="3702"/>
    <lineage>
        <taxon>Eukaryota</taxon>
        <taxon>Viridiplantae</taxon>
        <taxon>Streptophyta</taxon>
        <taxon>Embryophyta</taxon>
        <taxon>Tracheophyta</taxon>
        <taxon>Spermatophyta</taxon>
        <taxon>Magnoliopsida</taxon>
        <taxon>eudicotyledons</taxon>
        <taxon>Gunneridae</taxon>
        <taxon>Pentapetalae</taxon>
        <taxon>rosids</taxon>
        <taxon>malvids</taxon>
        <taxon>Brassicales</taxon>
        <taxon>Brassicaceae</taxon>
        <taxon>Camelineae</taxon>
        <taxon>Arabidopsis</taxon>
    </lineage>
</organism>
<gene>
    <name type="primary">CSN4</name>
    <name type="synonym">COP8</name>
    <name type="synonym">FUS4</name>
    <name type="ordered locus">At5g42970</name>
    <name type="ORF">MBD2.17</name>
</gene>
<comment type="function">
    <text evidence="2 3">Component of the COP9 signalosome complex (CSN), a complex involved in various cellular and developmental processes such as photomorphogenesis and auxin and jasmonate responses. The CSN complex is an essential regulator of the ubiquitin (Ubl) conjugation pathway by mediating the deneddylation of the cullin subunits of SCF-type E3 ligase complexes, leading to decrease the Ubl ligase activity of SCF. It is involved in repression of photomorphogenesis in darkness by regulating the activity of COP1-containing Ubl ligase complexes. The complex is also required for degradation of IAA6 by regulating the activity of the Ubl ligase SCF-TIR complex.</text>
</comment>
<comment type="subunit">
    <text evidence="2 4 5 6 7">Component of the CSN complex, probably composed of CSN1, CSN2, CSN3, CSN4, CSN5 (CSN5A or CSN5B), CSN6 (CSN6A or CSN6B), CSN7 and CSN8. Interacts with itself. In the complex, it is located in the center and probably interacts directly with CSN1, CSN2, CSN3, CSN4, CSN5A or CSN5B, CSN6A or CSN6B, CSN7 and CSN8. Interacts with COP10. Binds to the translation initiation factors TIF3E1 (PubMed:19704582).</text>
</comment>
<comment type="interaction">
    <interactant intactId="EBI-531074">
        <id>Q8L5U0</id>
    </interactant>
    <interactant intactId="EBI-530996">
        <id>P45432</id>
        <label>CSN1</label>
    </interactant>
    <organismsDiffer>false</organismsDiffer>
    <experiments>3</experiments>
</comment>
<comment type="interaction">
    <interactant intactId="EBI-531074">
        <id>Q8L5U0</id>
    </interactant>
    <interactant intactId="EBI-531055">
        <id>Q8W575</id>
        <label>CSN3</label>
    </interactant>
    <organismsDiffer>false</organismsDiffer>
    <experiments>5</experiments>
</comment>
<comment type="interaction">
    <interactant intactId="EBI-531074">
        <id>Q8L5U0</id>
    </interactant>
    <interactant intactId="EBI-531152">
        <id>Q94JU3</id>
        <label>CSN7</label>
    </interactant>
    <organismsDiffer>false</organismsDiffer>
    <experiments>5</experiments>
</comment>
<comment type="interaction">
    <interactant intactId="EBI-531074">
        <id>Q8L5U0</id>
    </interactant>
    <interactant intactId="EBI-530981">
        <id>P43255</id>
        <label>CSN8</label>
    </interactant>
    <organismsDiffer>false</organismsDiffer>
    <experiments>3</experiments>
</comment>
<comment type="interaction">
    <interactant intactId="EBI-531074">
        <id>Q8L5U0</id>
    </interactant>
    <interactant intactId="EBI-541750">
        <id>Q8LGH4</id>
        <label>CUL4</label>
    </interactant>
    <organismsDiffer>false</organismsDiffer>
    <experiments>2</experiments>
</comment>
<comment type="interaction">
    <interactant intactId="EBI-531074">
        <id>Q8L5U0</id>
    </interactant>
    <interactant intactId="EBI-15193683">
        <id>Q5CCK4</id>
        <label>VAL2</label>
    </interactant>
    <organismsDiffer>false</organismsDiffer>
    <experiments>3</experiments>
</comment>
<comment type="subcellular location">
    <subcellularLocation>
        <location evidence="8">Cytoplasm</location>
    </subcellularLocation>
    <subcellularLocation>
        <location evidence="8">Nucleus</location>
    </subcellularLocation>
</comment>
<comment type="similarity">
    <text evidence="8">Belongs to the CSN4 family.</text>
</comment>
<proteinExistence type="evidence at protein level"/>